<evidence type="ECO:0000250" key="1">
    <source>
        <dbReference type="UniProtKB" id="P09960"/>
    </source>
</evidence>
<evidence type="ECO:0000250" key="2">
    <source>
        <dbReference type="UniProtKB" id="Q10740"/>
    </source>
</evidence>
<evidence type="ECO:0000255" key="3">
    <source>
        <dbReference type="PROSITE-ProRule" id="PRU10095"/>
    </source>
</evidence>
<evidence type="ECO:0000305" key="4"/>
<protein>
    <recommendedName>
        <fullName>Leucine aminopeptidase 2</fullName>
        <ecNumber>3.4.11.-</ecNumber>
    </recommendedName>
    <alternativeName>
        <fullName>Epoxide hydrolase</fullName>
        <ecNumber>3.3.2.10</ecNumber>
    </alternativeName>
    <alternativeName>
        <fullName>Leukotriene A-4 hydrolase homolog</fullName>
        <shortName>LTA-4 hydrolase</shortName>
    </alternativeName>
</protein>
<feature type="chain" id="PRO_0000324935" description="Leucine aminopeptidase 2">
    <location>
        <begin position="1"/>
        <end position="623"/>
    </location>
</feature>
<feature type="active site" description="Proton acceptor" evidence="3">
    <location>
        <position position="303"/>
    </location>
</feature>
<feature type="active site" description="Proton donor" evidence="3">
    <location>
        <position position="390"/>
    </location>
</feature>
<feature type="binding site" evidence="1">
    <location>
        <begin position="136"/>
        <end position="138"/>
    </location>
    <ligand>
        <name>a peptide</name>
        <dbReference type="ChEBI" id="CHEBI:60466"/>
    </ligand>
</feature>
<feature type="binding site" evidence="1">
    <location>
        <begin position="273"/>
        <end position="278"/>
    </location>
    <ligand>
        <name>a peptide</name>
        <dbReference type="ChEBI" id="CHEBI:60466"/>
    </ligand>
</feature>
<feature type="binding site" evidence="3">
    <location>
        <position position="302"/>
    </location>
    <ligand>
        <name>Zn(2+)</name>
        <dbReference type="ChEBI" id="CHEBI:29105"/>
        <note>catalytic</note>
    </ligand>
</feature>
<feature type="binding site" evidence="3">
    <location>
        <position position="306"/>
    </location>
    <ligand>
        <name>Zn(2+)</name>
        <dbReference type="ChEBI" id="CHEBI:29105"/>
        <note>catalytic</note>
    </ligand>
</feature>
<feature type="binding site" evidence="3">
    <location>
        <position position="325"/>
    </location>
    <ligand>
        <name>Zn(2+)</name>
        <dbReference type="ChEBI" id="CHEBI:29105"/>
        <note>catalytic</note>
    </ligand>
</feature>
<name>LKHA4_PHANO</name>
<gene>
    <name type="ORF">SNOG_12761</name>
</gene>
<dbReference type="EC" id="3.4.11.-"/>
<dbReference type="EC" id="3.3.2.10"/>
<dbReference type="EMBL" id="CH445347">
    <property type="protein sequence ID" value="EAT80059.2"/>
    <property type="molecule type" value="Genomic_DNA"/>
</dbReference>
<dbReference type="RefSeq" id="XP_001802980.1">
    <property type="nucleotide sequence ID" value="XM_001802928.1"/>
</dbReference>
<dbReference type="SMR" id="Q0U653"/>
<dbReference type="FunCoup" id="Q0U653">
    <property type="interactions" value="958"/>
</dbReference>
<dbReference type="STRING" id="321614.Q0U653"/>
<dbReference type="MEROPS" id="M01.034"/>
<dbReference type="EnsemblFungi" id="SNOT_12761">
    <property type="protein sequence ID" value="SNOT_12761"/>
    <property type="gene ID" value="SNOG_12761"/>
</dbReference>
<dbReference type="GeneID" id="5979891"/>
<dbReference type="KEGG" id="pno:SNOG_12761"/>
<dbReference type="VEuPathDB" id="FungiDB:JI435_127610"/>
<dbReference type="eggNOG" id="KOG1047">
    <property type="taxonomic scope" value="Eukaryota"/>
</dbReference>
<dbReference type="HOGENOM" id="CLU_014505_1_1_1"/>
<dbReference type="InParanoid" id="Q0U653"/>
<dbReference type="Proteomes" id="UP000001055">
    <property type="component" value="Unassembled WGS sequence"/>
</dbReference>
<dbReference type="GO" id="GO:0005829">
    <property type="term" value="C:cytosol"/>
    <property type="evidence" value="ECO:0000318"/>
    <property type="project" value="GO_Central"/>
</dbReference>
<dbReference type="GO" id="GO:0000328">
    <property type="term" value="C:fungal-type vacuole lumen"/>
    <property type="evidence" value="ECO:0007669"/>
    <property type="project" value="EnsemblFungi"/>
</dbReference>
<dbReference type="GO" id="GO:0005771">
    <property type="term" value="C:multivesicular body"/>
    <property type="evidence" value="ECO:0007669"/>
    <property type="project" value="EnsemblFungi"/>
</dbReference>
<dbReference type="GO" id="GO:0005634">
    <property type="term" value="C:nucleus"/>
    <property type="evidence" value="ECO:0007669"/>
    <property type="project" value="UniProtKB-SubCell"/>
</dbReference>
<dbReference type="GO" id="GO:0061957">
    <property type="term" value="C:NVT complex"/>
    <property type="evidence" value="ECO:0007669"/>
    <property type="project" value="EnsemblFungi"/>
</dbReference>
<dbReference type="GO" id="GO:0004177">
    <property type="term" value="F:aminopeptidase activity"/>
    <property type="evidence" value="ECO:0000250"/>
    <property type="project" value="UniProtKB"/>
</dbReference>
<dbReference type="GO" id="GO:0004301">
    <property type="term" value="F:epoxide hydrolase activity"/>
    <property type="evidence" value="ECO:0000250"/>
    <property type="project" value="UniProtKB"/>
</dbReference>
<dbReference type="GO" id="GO:0008237">
    <property type="term" value="F:metallopeptidase activity"/>
    <property type="evidence" value="ECO:0007669"/>
    <property type="project" value="UniProtKB-KW"/>
</dbReference>
<dbReference type="GO" id="GO:0008270">
    <property type="term" value="F:zinc ion binding"/>
    <property type="evidence" value="ECO:0000250"/>
    <property type="project" value="UniProtKB"/>
</dbReference>
<dbReference type="GO" id="GO:0120113">
    <property type="term" value="P:cytoplasm to vacuole targeting by the NVT pathway"/>
    <property type="evidence" value="ECO:0007669"/>
    <property type="project" value="EnsemblFungi"/>
</dbReference>
<dbReference type="GO" id="GO:0006629">
    <property type="term" value="P:lipid metabolic process"/>
    <property type="evidence" value="ECO:0007669"/>
    <property type="project" value="EnsemblFungi"/>
</dbReference>
<dbReference type="GO" id="GO:0043171">
    <property type="term" value="P:peptide catabolic process"/>
    <property type="evidence" value="ECO:0000250"/>
    <property type="project" value="UniProtKB"/>
</dbReference>
<dbReference type="GO" id="GO:0030163">
    <property type="term" value="P:protein catabolic process"/>
    <property type="evidence" value="ECO:0007669"/>
    <property type="project" value="EnsemblFungi"/>
</dbReference>
<dbReference type="GO" id="GO:0006508">
    <property type="term" value="P:proteolysis"/>
    <property type="evidence" value="ECO:0007669"/>
    <property type="project" value="UniProtKB-KW"/>
</dbReference>
<dbReference type="CDD" id="cd09599">
    <property type="entry name" value="M1_LTA4H"/>
    <property type="match status" value="1"/>
</dbReference>
<dbReference type="FunFam" id="1.10.390.10:FF:000009">
    <property type="entry name" value="Leukotriene A(4) hydrolase"/>
    <property type="match status" value="1"/>
</dbReference>
<dbReference type="FunFam" id="1.25.40.320:FF:000001">
    <property type="entry name" value="Leukotriene A(4) hydrolase"/>
    <property type="match status" value="1"/>
</dbReference>
<dbReference type="FunFam" id="2.60.40.1730:FF:000004">
    <property type="entry name" value="Leukotriene A(4) hydrolase"/>
    <property type="match status" value="1"/>
</dbReference>
<dbReference type="FunFam" id="3.30.2010.30:FF:000001">
    <property type="entry name" value="Leukotriene A(4) hydrolase"/>
    <property type="match status" value="1"/>
</dbReference>
<dbReference type="Gene3D" id="3.30.2010.30">
    <property type="match status" value="1"/>
</dbReference>
<dbReference type="Gene3D" id="1.10.390.10">
    <property type="entry name" value="Neutral Protease Domain 2"/>
    <property type="match status" value="1"/>
</dbReference>
<dbReference type="Gene3D" id="1.25.40.320">
    <property type="entry name" value="Peptidase M1, leukotriene A4 hydrolase/aminopeptidase C-terminal domain"/>
    <property type="match status" value="1"/>
</dbReference>
<dbReference type="Gene3D" id="2.60.40.1730">
    <property type="entry name" value="tricorn interacting facor f3 domain"/>
    <property type="match status" value="1"/>
</dbReference>
<dbReference type="InterPro" id="IPR045357">
    <property type="entry name" value="Aminopeptidase_N-like_N"/>
</dbReference>
<dbReference type="InterPro" id="IPR042097">
    <property type="entry name" value="Aminopeptidase_N-like_N_sf"/>
</dbReference>
<dbReference type="InterPro" id="IPR016024">
    <property type="entry name" value="ARM-type_fold"/>
</dbReference>
<dbReference type="InterPro" id="IPR049980">
    <property type="entry name" value="LTA4H_cat"/>
</dbReference>
<dbReference type="InterPro" id="IPR038502">
    <property type="entry name" value="M1_LTA-4_hydro/amino_C_sf"/>
</dbReference>
<dbReference type="InterPro" id="IPR034015">
    <property type="entry name" value="M1_LTA4H"/>
</dbReference>
<dbReference type="InterPro" id="IPR001930">
    <property type="entry name" value="Peptidase_M1"/>
</dbReference>
<dbReference type="InterPro" id="IPR015211">
    <property type="entry name" value="Peptidase_M1_C"/>
</dbReference>
<dbReference type="InterPro" id="IPR014782">
    <property type="entry name" value="Peptidase_M1_dom"/>
</dbReference>
<dbReference type="InterPro" id="IPR027268">
    <property type="entry name" value="Peptidase_M4/M1_CTD_sf"/>
</dbReference>
<dbReference type="PANTHER" id="PTHR45726">
    <property type="entry name" value="LEUKOTRIENE A-4 HYDROLASE"/>
    <property type="match status" value="1"/>
</dbReference>
<dbReference type="PANTHER" id="PTHR45726:SF3">
    <property type="entry name" value="LEUKOTRIENE A-4 HYDROLASE"/>
    <property type="match status" value="1"/>
</dbReference>
<dbReference type="Pfam" id="PF09127">
    <property type="entry name" value="Leuk-A4-hydro_C"/>
    <property type="match status" value="1"/>
</dbReference>
<dbReference type="Pfam" id="PF01433">
    <property type="entry name" value="Peptidase_M1"/>
    <property type="match status" value="1"/>
</dbReference>
<dbReference type="Pfam" id="PF17900">
    <property type="entry name" value="Peptidase_M1_N"/>
    <property type="match status" value="1"/>
</dbReference>
<dbReference type="PRINTS" id="PR00756">
    <property type="entry name" value="ALADIPTASE"/>
</dbReference>
<dbReference type="SMART" id="SM01263">
    <property type="entry name" value="Leuk-A4-hydro_C"/>
    <property type="match status" value="1"/>
</dbReference>
<dbReference type="SUPFAM" id="SSF48371">
    <property type="entry name" value="ARM repeat"/>
    <property type="match status" value="1"/>
</dbReference>
<dbReference type="SUPFAM" id="SSF63737">
    <property type="entry name" value="Leukotriene A4 hydrolase N-terminal domain"/>
    <property type="match status" value="1"/>
</dbReference>
<dbReference type="SUPFAM" id="SSF55486">
    <property type="entry name" value="Metalloproteases ('zincins'), catalytic domain"/>
    <property type="match status" value="1"/>
</dbReference>
<dbReference type="PROSITE" id="PS00142">
    <property type="entry name" value="ZINC_PROTEASE"/>
    <property type="match status" value="1"/>
</dbReference>
<reference key="1">
    <citation type="journal article" date="2007" name="Plant Cell">
        <title>Dothideomycete-plant interactions illuminated by genome sequencing and EST analysis of the wheat pathogen Stagonospora nodorum.</title>
        <authorList>
            <person name="Hane J.K."/>
            <person name="Lowe R.G.T."/>
            <person name="Solomon P.S."/>
            <person name="Tan K.-C."/>
            <person name="Schoch C.L."/>
            <person name="Spatafora J.W."/>
            <person name="Crous P.W."/>
            <person name="Kodira C.D."/>
            <person name="Birren B.W."/>
            <person name="Galagan J.E."/>
            <person name="Torriani S.F.F."/>
            <person name="McDonald B.A."/>
            <person name="Oliver R.P."/>
        </authorList>
    </citation>
    <scope>NUCLEOTIDE SEQUENCE [LARGE SCALE GENOMIC DNA]</scope>
    <source>
        <strain>SN15 / ATCC MYA-4574 / FGSC 10173</strain>
    </source>
</reference>
<accession>Q0U653</accession>
<comment type="function">
    <text evidence="2">Aminopeptidase that preferentially cleaves di- and tripeptides. Also has low epoxide hydrolase activity (in vitro). Can hydrolyze the epoxide leukotriene LTA(4) but it forms preferentially 5,6-dihydroxy-7,9,11,14-eicosatetraenoic acid rather than the cytokine leukotriene B(4) as the product compared to the homologous mammalian enzyme (in vitro).</text>
</comment>
<comment type="catalytic activity">
    <reaction evidence="2">
        <text>an epoxide + H2O = an ethanediol</text>
        <dbReference type="Rhea" id="RHEA:19037"/>
        <dbReference type="ChEBI" id="CHEBI:15377"/>
        <dbReference type="ChEBI" id="CHEBI:32955"/>
        <dbReference type="ChEBI" id="CHEBI:140594"/>
        <dbReference type="EC" id="3.3.2.10"/>
    </reaction>
</comment>
<comment type="cofactor">
    <cofactor evidence="2">
        <name>Zn(2+)</name>
        <dbReference type="ChEBI" id="CHEBI:29105"/>
    </cofactor>
    <text evidence="2">Binds 1 zinc ion per subunit.</text>
</comment>
<comment type="subcellular location">
    <subcellularLocation>
        <location evidence="2">Cytoplasm</location>
    </subcellularLocation>
    <subcellularLocation>
        <location evidence="2">Nucleus</location>
    </subcellularLocation>
</comment>
<comment type="similarity">
    <text evidence="4">Belongs to the peptidase M1 family.</text>
</comment>
<organism>
    <name type="scientific">Phaeosphaeria nodorum (strain SN15 / ATCC MYA-4574 / FGSC 10173)</name>
    <name type="common">Glume blotch fungus</name>
    <name type="synonym">Parastagonospora nodorum</name>
    <dbReference type="NCBI Taxonomy" id="321614"/>
    <lineage>
        <taxon>Eukaryota</taxon>
        <taxon>Fungi</taxon>
        <taxon>Dikarya</taxon>
        <taxon>Ascomycota</taxon>
        <taxon>Pezizomycotina</taxon>
        <taxon>Dothideomycetes</taxon>
        <taxon>Pleosporomycetidae</taxon>
        <taxon>Pleosporales</taxon>
        <taxon>Pleosporineae</taxon>
        <taxon>Phaeosphaeriaceae</taxon>
        <taxon>Parastagonospora</taxon>
    </lineage>
</organism>
<keyword id="KW-0963">Cytoplasm</keyword>
<keyword id="KW-0378">Hydrolase</keyword>
<keyword id="KW-0479">Metal-binding</keyword>
<keyword id="KW-0482">Metalloprotease</keyword>
<keyword id="KW-0539">Nucleus</keyword>
<keyword id="KW-0645">Protease</keyword>
<keyword id="KW-0862">Zinc</keyword>
<proteinExistence type="inferred from homology"/>
<sequence>METRTPRDPNTLSNYHNYVTRHTSLDFEIEFERKRLVGSVVLRMESLTDAEVDVVLDSSFLDVSAIKVDRQSAEFSIGERIEPYGSPLTIKLPAAVPKGKTVEIELTVATTEKCTALQWMEPAQTSNKKHPYMFSQCQANHARSVFPCQDTPDVKSTFSFALRSPLPVLASGLPTGASKYQPAKKDGASGTLKYTFEQPVAITSYLMAVASGDLACASIGPRSTVWSGPEELLECQQELEGEIEPFMKAIESIVKPTYQWTQYNVLILPPSFPYGGMENPVWTYATPSIISGDKQNIDVIAHELSHSWSGNLVSAASWEHFWLNEGWTTYLERRIQGVLHGESHRHFSAIIGWKALEESIERYGADHDFTKLVIDLKGKDPDDAFSSIPYEKGFHALYQFELLLGKDKWDNFIPHYFETFKFKSIDSYDFKACLIDFFAKDTEANKKLAEFDWDKLFYAPGYPPKPDFDQTMVKSCYKLADKWQYLITNNSSSDFKPHHSDVADWVSNQSVVFLEKVQSFAEKFSAEQIHLLGHTYGYDKTQNIEVLSRYLSAGLMAKAPETYQPSAELLGRIGRMKFVRPMYRLLEKADRKLAVETFEKNKDFYHPICRSMVEKDLFGDEKK</sequence>